<name>HBE_NOTEU</name>
<comment type="function">
    <text>Hemoglobin epsilon chain is an embryonic-type beta-type chain found in prenatal and neonatal marsupials.</text>
</comment>
<comment type="tissue specificity">
    <text>Red blood cells.</text>
</comment>
<comment type="similarity">
    <text evidence="2">Belongs to the globin family.</text>
</comment>
<sequence length="147" mass="16076">MVHFTAEEKTAITSVWGKVNVEETGGEALGRLLVVYPWTQRFFDSFGNLSSASAILGNPKVKAHGKKVLTSLGEAVKNLDNLKATFSKLSELHCDKLHVDPENFRLLGNVLVVVLAVHFGKEFTPEVHAAWQKLVAGVASALAHKYH</sequence>
<gene>
    <name type="primary">HBE1</name>
</gene>
<reference key="1">
    <citation type="journal article" date="2004" name="J. Mol. Evol.">
        <title>Linkage of the beta-like omega-globin gene to alpha-like globin genes in an Australian marsupial supports the chromosome duplication model for separation of globin gene clusters.</title>
        <authorList>
            <person name="Wheeler D."/>
            <person name="Hope R.M."/>
            <person name="Cooper S.J.B."/>
            <person name="Gooley A.A."/>
            <person name="Holland R.A.B."/>
        </authorList>
    </citation>
    <scope>NUCLEOTIDE SEQUENCE [GENOMIC DNA]</scope>
    <source>
        <tissue>Liver</tissue>
    </source>
</reference>
<reference key="2">
    <citation type="journal article" date="1997" name="Eur. J. Biochem.">
        <title>Characterization of the embryonic globin chains of the marsupial Tammar wallaby, Macropus eugenii.</title>
        <authorList>
            <person name="Holland R.A.B."/>
            <person name="Gooley A.A."/>
        </authorList>
    </citation>
    <scope>PROTEIN SEQUENCE OF 2-61</scope>
    <source>
        <tissue>Blood</tissue>
    </source>
</reference>
<evidence type="ECO:0000250" key="1">
    <source>
        <dbReference type="UniProtKB" id="P02100"/>
    </source>
</evidence>
<evidence type="ECO:0000255" key="2">
    <source>
        <dbReference type="PROSITE-ProRule" id="PRU00238"/>
    </source>
</evidence>
<evidence type="ECO:0000269" key="3">
    <source>
    </source>
</evidence>
<evidence type="ECO:0000305" key="4"/>
<feature type="initiator methionine" description="Removed" evidence="3">
    <location>
        <position position="1"/>
    </location>
</feature>
<feature type="chain" id="PRO_0000053216" description="Hemoglobin subunit epsilon">
    <location>
        <begin position="2"/>
        <end position="147"/>
    </location>
</feature>
<feature type="domain" description="Globin" evidence="2">
    <location>
        <begin position="3"/>
        <end position="147"/>
    </location>
</feature>
<feature type="binding site" description="distal binding residue" evidence="2">
    <location>
        <position position="64"/>
    </location>
    <ligand>
        <name>heme b</name>
        <dbReference type="ChEBI" id="CHEBI:60344"/>
    </ligand>
    <ligandPart>
        <name>Fe</name>
        <dbReference type="ChEBI" id="CHEBI:18248"/>
    </ligandPart>
</feature>
<feature type="binding site" description="proximal binding residue" evidence="2">
    <location>
        <position position="93"/>
    </location>
    <ligand>
        <name>heme b</name>
        <dbReference type="ChEBI" id="CHEBI:60344"/>
    </ligand>
    <ligandPart>
        <name>Fe</name>
        <dbReference type="ChEBI" id="CHEBI:18248"/>
    </ligandPart>
</feature>
<feature type="modified residue" description="Phosphoserine" evidence="1">
    <location>
        <position position="14"/>
    </location>
</feature>
<feature type="modified residue" description="Phosphoserine" evidence="1">
    <location>
        <position position="51"/>
    </location>
</feature>
<feature type="sequence conflict" description="In Ref. 2; AA sequence." evidence="4" ref="2">
    <original>S</original>
    <variation>A</variation>
    <location>
        <position position="53"/>
    </location>
</feature>
<organism>
    <name type="scientific">Notamacropus eugenii</name>
    <name type="common">Tammar wallaby</name>
    <name type="synonym">Macropus eugenii</name>
    <dbReference type="NCBI Taxonomy" id="9315"/>
    <lineage>
        <taxon>Eukaryota</taxon>
        <taxon>Metazoa</taxon>
        <taxon>Chordata</taxon>
        <taxon>Craniata</taxon>
        <taxon>Vertebrata</taxon>
        <taxon>Euteleostomi</taxon>
        <taxon>Mammalia</taxon>
        <taxon>Metatheria</taxon>
        <taxon>Diprotodontia</taxon>
        <taxon>Macropodidae</taxon>
        <taxon>Notamacropus</taxon>
    </lineage>
</organism>
<proteinExistence type="evidence at protein level"/>
<dbReference type="EMBL" id="AY450927">
    <property type="protein sequence ID" value="AAS15709.1"/>
    <property type="molecule type" value="Genomic_DNA"/>
</dbReference>
<dbReference type="SMR" id="P81042"/>
<dbReference type="HOGENOM" id="CLU_003827_10_0_1"/>
<dbReference type="OMA" id="AVIANMW"/>
<dbReference type="TreeFam" id="TF333268"/>
<dbReference type="GO" id="GO:0072562">
    <property type="term" value="C:blood microparticle"/>
    <property type="evidence" value="ECO:0007669"/>
    <property type="project" value="TreeGrafter"/>
</dbReference>
<dbReference type="GO" id="GO:0031838">
    <property type="term" value="C:haptoglobin-hemoglobin complex"/>
    <property type="evidence" value="ECO:0007669"/>
    <property type="project" value="TreeGrafter"/>
</dbReference>
<dbReference type="GO" id="GO:0005833">
    <property type="term" value="C:hemoglobin complex"/>
    <property type="evidence" value="ECO:0007669"/>
    <property type="project" value="InterPro"/>
</dbReference>
<dbReference type="GO" id="GO:0031720">
    <property type="term" value="F:haptoglobin binding"/>
    <property type="evidence" value="ECO:0007669"/>
    <property type="project" value="TreeGrafter"/>
</dbReference>
<dbReference type="GO" id="GO:0020037">
    <property type="term" value="F:heme binding"/>
    <property type="evidence" value="ECO:0007669"/>
    <property type="project" value="InterPro"/>
</dbReference>
<dbReference type="GO" id="GO:0046872">
    <property type="term" value="F:metal ion binding"/>
    <property type="evidence" value="ECO:0007669"/>
    <property type="project" value="UniProtKB-KW"/>
</dbReference>
<dbReference type="GO" id="GO:0043177">
    <property type="term" value="F:organic acid binding"/>
    <property type="evidence" value="ECO:0007669"/>
    <property type="project" value="TreeGrafter"/>
</dbReference>
<dbReference type="GO" id="GO:0019825">
    <property type="term" value="F:oxygen binding"/>
    <property type="evidence" value="ECO:0007669"/>
    <property type="project" value="InterPro"/>
</dbReference>
<dbReference type="GO" id="GO:0005344">
    <property type="term" value="F:oxygen carrier activity"/>
    <property type="evidence" value="ECO:0007669"/>
    <property type="project" value="UniProtKB-KW"/>
</dbReference>
<dbReference type="GO" id="GO:0004601">
    <property type="term" value="F:peroxidase activity"/>
    <property type="evidence" value="ECO:0007669"/>
    <property type="project" value="TreeGrafter"/>
</dbReference>
<dbReference type="GO" id="GO:0042744">
    <property type="term" value="P:hydrogen peroxide catabolic process"/>
    <property type="evidence" value="ECO:0007669"/>
    <property type="project" value="TreeGrafter"/>
</dbReference>
<dbReference type="CDD" id="cd08925">
    <property type="entry name" value="Hb-beta-like"/>
    <property type="match status" value="1"/>
</dbReference>
<dbReference type="FunFam" id="1.10.490.10:FF:000001">
    <property type="entry name" value="Hemoglobin subunit beta"/>
    <property type="match status" value="1"/>
</dbReference>
<dbReference type="Gene3D" id="1.10.490.10">
    <property type="entry name" value="Globins"/>
    <property type="match status" value="1"/>
</dbReference>
<dbReference type="InterPro" id="IPR000971">
    <property type="entry name" value="Globin"/>
</dbReference>
<dbReference type="InterPro" id="IPR009050">
    <property type="entry name" value="Globin-like_sf"/>
</dbReference>
<dbReference type="InterPro" id="IPR012292">
    <property type="entry name" value="Globin/Proto"/>
</dbReference>
<dbReference type="InterPro" id="IPR002337">
    <property type="entry name" value="Hemoglobin_b"/>
</dbReference>
<dbReference type="InterPro" id="IPR050056">
    <property type="entry name" value="Hemoglobin_oxygen_transport"/>
</dbReference>
<dbReference type="PANTHER" id="PTHR11442">
    <property type="entry name" value="HEMOGLOBIN FAMILY MEMBER"/>
    <property type="match status" value="1"/>
</dbReference>
<dbReference type="PANTHER" id="PTHR11442:SF7">
    <property type="entry name" value="HEMOGLOBIN SUBUNIT EPSILON"/>
    <property type="match status" value="1"/>
</dbReference>
<dbReference type="Pfam" id="PF00042">
    <property type="entry name" value="Globin"/>
    <property type="match status" value="1"/>
</dbReference>
<dbReference type="PRINTS" id="PR00814">
    <property type="entry name" value="BETAHAEM"/>
</dbReference>
<dbReference type="SUPFAM" id="SSF46458">
    <property type="entry name" value="Globin-like"/>
    <property type="match status" value="1"/>
</dbReference>
<dbReference type="PROSITE" id="PS01033">
    <property type="entry name" value="GLOBIN"/>
    <property type="match status" value="1"/>
</dbReference>
<protein>
    <recommendedName>
        <fullName>Hemoglobin subunit epsilon</fullName>
    </recommendedName>
    <alternativeName>
        <fullName>Epsilon-globin</fullName>
    </alternativeName>
    <alternativeName>
        <fullName>Hemoglobin epsilon chain</fullName>
    </alternativeName>
</protein>
<accession>P81042</accession>
<accession>Q6H1U8</accession>
<keyword id="KW-0903">Direct protein sequencing</keyword>
<keyword id="KW-0349">Heme</keyword>
<keyword id="KW-0408">Iron</keyword>
<keyword id="KW-0479">Metal-binding</keyword>
<keyword id="KW-0561">Oxygen transport</keyword>
<keyword id="KW-0597">Phosphoprotein</keyword>
<keyword id="KW-0813">Transport</keyword>